<evidence type="ECO:0000255" key="1">
    <source>
        <dbReference type="HAMAP-Rule" id="MF_02110"/>
    </source>
</evidence>
<organism>
    <name type="scientific">Campylobacter jejuni subsp. doylei (strain ATCC BAA-1458 / RM4099 / 269.97)</name>
    <dbReference type="NCBI Taxonomy" id="360109"/>
    <lineage>
        <taxon>Bacteria</taxon>
        <taxon>Pseudomonadati</taxon>
        <taxon>Campylobacterota</taxon>
        <taxon>Epsilonproteobacteria</taxon>
        <taxon>Campylobacterales</taxon>
        <taxon>Campylobacteraceae</taxon>
        <taxon>Campylobacter</taxon>
    </lineage>
</organism>
<gene>
    <name type="ordered locus">JJD26997_0796</name>
</gene>
<name>Y796_CAMJD</name>
<dbReference type="EMBL" id="CP000768">
    <property type="protein sequence ID" value="ABS44832.1"/>
    <property type="molecule type" value="Genomic_DNA"/>
</dbReference>
<dbReference type="SMR" id="A7H346"/>
<dbReference type="KEGG" id="cjd:JJD26997_0796"/>
<dbReference type="HOGENOM" id="CLU_120359_1_0_7"/>
<dbReference type="Proteomes" id="UP000002302">
    <property type="component" value="Chromosome"/>
</dbReference>
<dbReference type="HAMAP" id="MF_02110">
    <property type="entry name" value="UPF0763"/>
    <property type="match status" value="1"/>
</dbReference>
<dbReference type="InterPro" id="IPR019724">
    <property type="entry name" value="UPF0763"/>
</dbReference>
<dbReference type="Pfam" id="PF10788">
    <property type="entry name" value="DUF2603"/>
    <property type="match status" value="1"/>
</dbReference>
<reference key="1">
    <citation type="submission" date="2007-07" db="EMBL/GenBank/DDBJ databases">
        <title>Complete genome sequence of Campylobacter jejuni subsp doylei 269.97 isolated from human blood.</title>
        <authorList>
            <person name="Fouts D.E."/>
            <person name="Mongodin E.F."/>
            <person name="Puiu D."/>
            <person name="Sebastian Y."/>
            <person name="Miller W.G."/>
            <person name="Mandrell R.E."/>
            <person name="Lastovica A.J."/>
            <person name="Nelson K.E."/>
        </authorList>
    </citation>
    <scope>NUCLEOTIDE SEQUENCE [LARGE SCALE GENOMIC DNA]</scope>
    <source>
        <strain>ATCC BAA-1458 / RM4099 / 269.97</strain>
    </source>
</reference>
<sequence length="163" mass="19171">MKELEKYSTCLKCIDEFSQNLGIKKKDRTIFKMKQSENENEKCLVLENGSFESPEPWFVIDENDEIHTLLSLQSLKNILESLKQSQKENFELRLEKAIYQQIPVDFNDVWTVAMDEIKQKAQNGTMEVSIDLEKLISKIKQEHPNLFVDMQAMIEKVNQNERL</sequence>
<comment type="similarity">
    <text evidence="1">Belongs to the UPF0763 family.</text>
</comment>
<feature type="chain" id="PRO_0000394780" description="UPF0763 protein JJD26997_0796">
    <location>
        <begin position="1"/>
        <end position="163"/>
    </location>
</feature>
<protein>
    <recommendedName>
        <fullName evidence="1">UPF0763 protein JJD26997_0796</fullName>
    </recommendedName>
</protein>
<proteinExistence type="inferred from homology"/>
<accession>A7H346</accession>